<protein>
    <recommendedName>
        <fullName>V-type proton ATPase 116 kDa subunit a 1</fullName>
        <shortName>V-ATPase 116 kDa subunit a 1</shortName>
    </recommendedName>
    <alternativeName>
        <fullName>Vacuolar proton translocating ATPase 116 kDa subunit a isoform 1</fullName>
    </alternativeName>
</protein>
<evidence type="ECO:0000250" key="1">
    <source>
        <dbReference type="UniProtKB" id="P25286"/>
    </source>
</evidence>
<evidence type="ECO:0000250" key="2">
    <source>
        <dbReference type="UniProtKB" id="P32563"/>
    </source>
</evidence>
<evidence type="ECO:0000250" key="3">
    <source>
        <dbReference type="UniProtKB" id="Q29466"/>
    </source>
</evidence>
<evidence type="ECO:0000250" key="4">
    <source>
        <dbReference type="UniProtKB" id="Q93050"/>
    </source>
</evidence>
<evidence type="ECO:0000250" key="5">
    <source>
        <dbReference type="UniProtKB" id="Q9Z1G4"/>
    </source>
</evidence>
<evidence type="ECO:0000255" key="6"/>
<evidence type="ECO:0000305" key="7"/>
<feature type="chain" id="PRO_0000119213" description="V-type proton ATPase 116 kDa subunit a 1">
    <location>
        <begin position="1"/>
        <end position="837"/>
    </location>
</feature>
<feature type="topological domain" description="Cytoplasmic" evidence="6">
    <location>
        <begin position="1"/>
        <end position="388"/>
    </location>
</feature>
<feature type="transmembrane region" description="Helical" evidence="6">
    <location>
        <begin position="389"/>
        <end position="407"/>
    </location>
</feature>
<feature type="topological domain" description="Vacuolar" evidence="6">
    <location>
        <begin position="408"/>
        <end position="409"/>
    </location>
</feature>
<feature type="transmembrane region" description="Helical" evidence="6">
    <location>
        <begin position="410"/>
        <end position="426"/>
    </location>
</feature>
<feature type="topological domain" description="Cytoplasmic" evidence="6">
    <location>
        <begin position="427"/>
        <end position="441"/>
    </location>
</feature>
<feature type="transmembrane region" description="Helical" evidence="6">
    <location>
        <begin position="442"/>
        <end position="471"/>
    </location>
</feature>
<feature type="topological domain" description="Vacuolar" evidence="6">
    <location>
        <begin position="472"/>
        <end position="534"/>
    </location>
</feature>
<feature type="transmembrane region" description="Helical" evidence="6">
    <location>
        <begin position="535"/>
        <end position="554"/>
    </location>
</feature>
<feature type="topological domain" description="Cytoplasmic" evidence="6">
    <location>
        <begin position="555"/>
        <end position="572"/>
    </location>
</feature>
<feature type="transmembrane region" description="Helical" evidence="6">
    <location>
        <begin position="573"/>
        <end position="593"/>
    </location>
</feature>
<feature type="topological domain" description="Vacuolar" evidence="6">
    <location>
        <begin position="594"/>
        <end position="638"/>
    </location>
</feature>
<feature type="transmembrane region" description="Helical" evidence="6">
    <location>
        <begin position="639"/>
        <end position="658"/>
    </location>
</feature>
<feature type="topological domain" description="Cytoplasmic" evidence="6">
    <location>
        <begin position="659"/>
        <end position="724"/>
    </location>
</feature>
<feature type="transmembrane region" description="Helical" evidence="6">
    <location>
        <begin position="725"/>
        <end position="749"/>
    </location>
</feature>
<feature type="topological domain" description="Vacuolar" evidence="6">
    <location>
        <begin position="750"/>
        <end position="770"/>
    </location>
</feature>
<feature type="transmembrane region" description="Helical" evidence="6">
    <location>
        <begin position="771"/>
        <end position="809"/>
    </location>
</feature>
<feature type="topological domain" description="Cytoplasmic" evidence="6">
    <location>
        <begin position="810"/>
        <end position="837"/>
    </location>
</feature>
<feature type="modified residue" description="Phosphothreonine" evidence="5">
    <location>
        <position position="250"/>
    </location>
</feature>
<feature type="modified residue" description="Phosphothreonine" evidence="4">
    <location>
        <position position="360"/>
    </location>
</feature>
<feature type="modified residue" description="Phosphotyrosine" evidence="5">
    <location>
        <position position="364"/>
    </location>
</feature>
<dbReference type="EMBL" id="CR861438">
    <property type="protein sequence ID" value="CAH93494.1"/>
    <property type="molecule type" value="mRNA"/>
</dbReference>
<dbReference type="SMR" id="Q5R422"/>
<dbReference type="FunCoup" id="Q5R422">
    <property type="interactions" value="3219"/>
</dbReference>
<dbReference type="STRING" id="9601.ENSPPYP00000009433"/>
<dbReference type="eggNOG" id="KOG2189">
    <property type="taxonomic scope" value="Eukaryota"/>
</dbReference>
<dbReference type="InParanoid" id="Q5R422"/>
<dbReference type="Proteomes" id="UP000001595">
    <property type="component" value="Unplaced"/>
</dbReference>
<dbReference type="GO" id="GO:0030665">
    <property type="term" value="C:clathrin-coated vesicle membrane"/>
    <property type="evidence" value="ECO:0007669"/>
    <property type="project" value="UniProtKB-SubCell"/>
</dbReference>
<dbReference type="GO" id="GO:0042470">
    <property type="term" value="C:melanosome"/>
    <property type="evidence" value="ECO:0007669"/>
    <property type="project" value="UniProtKB-SubCell"/>
</dbReference>
<dbReference type="GO" id="GO:0005886">
    <property type="term" value="C:plasma membrane"/>
    <property type="evidence" value="ECO:0007669"/>
    <property type="project" value="TreeGrafter"/>
</dbReference>
<dbReference type="GO" id="GO:0030672">
    <property type="term" value="C:synaptic vesicle membrane"/>
    <property type="evidence" value="ECO:0007669"/>
    <property type="project" value="UniProtKB-SubCell"/>
</dbReference>
<dbReference type="GO" id="GO:0000220">
    <property type="term" value="C:vacuolar proton-transporting V-type ATPase, V0 domain"/>
    <property type="evidence" value="ECO:0000250"/>
    <property type="project" value="UniProtKB"/>
</dbReference>
<dbReference type="GO" id="GO:0051117">
    <property type="term" value="F:ATPase binding"/>
    <property type="evidence" value="ECO:0007669"/>
    <property type="project" value="TreeGrafter"/>
</dbReference>
<dbReference type="GO" id="GO:0046961">
    <property type="term" value="F:proton-transporting ATPase activity, rotational mechanism"/>
    <property type="evidence" value="ECO:0007669"/>
    <property type="project" value="InterPro"/>
</dbReference>
<dbReference type="GO" id="GO:0007035">
    <property type="term" value="P:vacuolar acidification"/>
    <property type="evidence" value="ECO:0007669"/>
    <property type="project" value="TreeGrafter"/>
</dbReference>
<dbReference type="InterPro" id="IPR002490">
    <property type="entry name" value="V-ATPase_116kDa_su"/>
</dbReference>
<dbReference type="InterPro" id="IPR026028">
    <property type="entry name" value="V-type_ATPase_116kDa_su_euka"/>
</dbReference>
<dbReference type="PANTHER" id="PTHR11629:SF68">
    <property type="entry name" value="V-TYPE PROTON ATPASE 116 KDA SUBUNIT A 1"/>
    <property type="match status" value="1"/>
</dbReference>
<dbReference type="PANTHER" id="PTHR11629">
    <property type="entry name" value="VACUOLAR PROTON ATPASES"/>
    <property type="match status" value="1"/>
</dbReference>
<dbReference type="Pfam" id="PF01496">
    <property type="entry name" value="V_ATPase_I"/>
    <property type="match status" value="1"/>
</dbReference>
<dbReference type="PIRSF" id="PIRSF001293">
    <property type="entry name" value="ATP6V0A1"/>
    <property type="match status" value="1"/>
</dbReference>
<sequence>MGELFRSEEMTLAQLFLQSEAAYCCVSELGELGKVQFRDLNPDVNVFQRKFVNEVRRCEEMDRKLRFVEKEIRKANIPIMDTGENPEVPFPRDMIDLEANFEKIENELKEINTNQEALKRNFLELTELKFILRKTQQFFDEMADPDLLGESSSLLEPSEMGRGTPLRLGFVAGVINRERIPTFERMLWRVCRGNVFLRQAEIENPLEDPVTGDYVHKSVFIIFFQGDQLKNRVKKICEGFRASLYPCPETPQERKEMASGVNTRIDDLQMVLNQMEDHRQRVLQAAAKNIRVWFIKVRKMKAIYHTLNLCNIDVTQKCLIAEVWCPVTDLDSIQFALRRGTEHSGSTVPSILNRMQTNQTPPTYNKTNKFTYGFQNIVDAYGIGTYREINPAPYTIITFPFLFAVMFGDFGHGILMTLFAVWMVLRESRILSQKNENEMFSTVFSGRYIILLMGVFSMYTGLIYNDCFSKSLNIFGSSWSVRPMFTYNWTEETLRGNPVLQLNPALPGVFGGPYPFGIDPIWNIATNKLTFLNSFKMKMSVILGIIHMLFGVSLSLFNHIYFKKPLNIYFGFIPEIIFMTSLFGYLVILIFYKWTAYDAHTSENAPSLLIHFINMFLFSYPESGYSMLYSGQKGIQCFLVVVALLCVPWMLLFKPLVLRRQYLRRKHLGTLNFGGIRVGNGPTEEDAEIIQHDQLSTHSEDADEPTEDEVFDFGATMVHQAIHTIEYCLGCISNTASYLRLWALSLAHAQLSEVLWTMVIHIGLSVKSLAGGLVLFFFFTAFATLTVAILLIMEGLSAFLHALRLHWVEFQNKFYSGTGFKFLPFSFEHIREGKFGE</sequence>
<comment type="function">
    <text evidence="2 3 4 5">Subunit of the V0 complex of vacuolar(H+)-ATPase (V-ATPase), a multisubunit enzyme composed of a peripheral complex (V1) that hydrolyzes ATP and a membrane integral complex (V0) that translocates protons (By similarity). V-ATPase is responsible for the acidification of various organelles, such as lysosomes, endosomes, the trans-Golgi network, and secretory granules, including synaptic vesicles. In certain cell types, can be exported to the plasma membrane, where it is involved in the acidification of the extracellular environment (By similarity). Required for assembly and activity of the vacuolar ATPase (By similarity). Through its action on compartment acidification, plays an essential role in neuronal development in terms of integrity and connectivity of neurons (By similarity).</text>
</comment>
<comment type="subunit">
    <text evidence="4">V-ATPase is a heteromultimeric enzyme made up of two complexes: the ATP-hydrolytic V1 complex and the proton translocation V0 complex (By similarity). The V1 complex consists of three catalytic AB heterodimers that form a heterohexamer, three peripheral stalks each consisting of EG heterodimers, one central rotor including subunits D and F, and the regulatory subunits C and H (By similarity). The proton translocation complex V0 consists of the proton transport subunit a, a ring of proteolipid subunits c9c'', rotary subunit d, subunits e and f, and the accessory subunits ATP6AP1/Ac45 and ATP6AP2/PRR (By similarity). Interacts with SPAAR (By similarity).</text>
</comment>
<comment type="subcellular location">
    <subcellularLocation>
        <location evidence="1">Cytoplasmic vesicle</location>
        <location evidence="1">Clathrin-coated vesicle membrane</location>
        <topology evidence="6">Multi-pass membrane protein</topology>
    </subcellularLocation>
    <subcellularLocation>
        <location evidence="1">Cytoplasmic vesicle</location>
        <location evidence="1">Secretory vesicle</location>
        <location evidence="1">Synaptic vesicle membrane</location>
        <topology evidence="6">Multi-pass membrane protein</topology>
    </subcellularLocation>
    <subcellularLocation>
        <location evidence="4">Melanosome</location>
    </subcellularLocation>
</comment>
<comment type="similarity">
    <text evidence="7">Belongs to the V-ATPase 116 kDa subunit family.</text>
</comment>
<keyword id="KW-0968">Cytoplasmic vesicle</keyword>
<keyword id="KW-0375">Hydrogen ion transport</keyword>
<keyword id="KW-0406">Ion transport</keyword>
<keyword id="KW-0472">Membrane</keyword>
<keyword id="KW-0597">Phosphoprotein</keyword>
<keyword id="KW-1185">Reference proteome</keyword>
<keyword id="KW-0770">Synapse</keyword>
<keyword id="KW-0812">Transmembrane</keyword>
<keyword id="KW-1133">Transmembrane helix</keyword>
<keyword id="KW-0813">Transport</keyword>
<gene>
    <name type="primary">ATP6V0A1</name>
</gene>
<proteinExistence type="evidence at transcript level"/>
<organism>
    <name type="scientific">Pongo abelii</name>
    <name type="common">Sumatran orangutan</name>
    <name type="synonym">Pongo pygmaeus abelii</name>
    <dbReference type="NCBI Taxonomy" id="9601"/>
    <lineage>
        <taxon>Eukaryota</taxon>
        <taxon>Metazoa</taxon>
        <taxon>Chordata</taxon>
        <taxon>Craniata</taxon>
        <taxon>Vertebrata</taxon>
        <taxon>Euteleostomi</taxon>
        <taxon>Mammalia</taxon>
        <taxon>Eutheria</taxon>
        <taxon>Euarchontoglires</taxon>
        <taxon>Primates</taxon>
        <taxon>Haplorrhini</taxon>
        <taxon>Catarrhini</taxon>
        <taxon>Hominidae</taxon>
        <taxon>Pongo</taxon>
    </lineage>
</organism>
<accession>Q5R422</accession>
<name>VPP1_PONAB</name>
<reference key="1">
    <citation type="submission" date="2004-11" db="EMBL/GenBank/DDBJ databases">
        <authorList>
            <consortium name="The German cDNA consortium"/>
        </authorList>
    </citation>
    <scope>NUCLEOTIDE SEQUENCE [LARGE SCALE MRNA]</scope>
    <source>
        <tissue>Brain cortex</tissue>
    </source>
</reference>